<dbReference type="EC" id="5.3.1.6" evidence="1"/>
<dbReference type="EMBL" id="AE005174">
    <property type="protein sequence ID" value="AAG58041.1"/>
    <property type="molecule type" value="Genomic_DNA"/>
</dbReference>
<dbReference type="EMBL" id="BA000007">
    <property type="protein sequence ID" value="BAB37208.1"/>
    <property type="molecule type" value="Genomic_DNA"/>
</dbReference>
<dbReference type="PIR" id="A98102">
    <property type="entry name" value="A98102"/>
</dbReference>
<dbReference type="PIR" id="E85947">
    <property type="entry name" value="E85947"/>
</dbReference>
<dbReference type="RefSeq" id="NP_311812.1">
    <property type="nucleotide sequence ID" value="NC_002695.1"/>
</dbReference>
<dbReference type="RefSeq" id="WP_000189743.1">
    <property type="nucleotide sequence ID" value="NZ_VOAI01000003.1"/>
</dbReference>
<dbReference type="SMR" id="P0A7Z2"/>
<dbReference type="STRING" id="155864.Z4252"/>
<dbReference type="GeneID" id="916389"/>
<dbReference type="GeneID" id="93779085"/>
<dbReference type="KEGG" id="ece:Z4252"/>
<dbReference type="KEGG" id="ecs:ECs_3785"/>
<dbReference type="PATRIC" id="fig|386585.9.peg.3950"/>
<dbReference type="eggNOG" id="COG0120">
    <property type="taxonomic scope" value="Bacteria"/>
</dbReference>
<dbReference type="HOGENOM" id="CLU_056590_1_1_6"/>
<dbReference type="OMA" id="ACHVQEK"/>
<dbReference type="UniPathway" id="UPA00115">
    <property type="reaction ID" value="UER00412"/>
</dbReference>
<dbReference type="Proteomes" id="UP000000558">
    <property type="component" value="Chromosome"/>
</dbReference>
<dbReference type="Proteomes" id="UP000002519">
    <property type="component" value="Chromosome"/>
</dbReference>
<dbReference type="GO" id="GO:0005829">
    <property type="term" value="C:cytosol"/>
    <property type="evidence" value="ECO:0007669"/>
    <property type="project" value="TreeGrafter"/>
</dbReference>
<dbReference type="GO" id="GO:0004751">
    <property type="term" value="F:ribose-5-phosphate isomerase activity"/>
    <property type="evidence" value="ECO:0007669"/>
    <property type="project" value="UniProtKB-UniRule"/>
</dbReference>
<dbReference type="GO" id="GO:0006014">
    <property type="term" value="P:D-ribose metabolic process"/>
    <property type="evidence" value="ECO:0007669"/>
    <property type="project" value="TreeGrafter"/>
</dbReference>
<dbReference type="GO" id="GO:0009052">
    <property type="term" value="P:pentose-phosphate shunt, non-oxidative branch"/>
    <property type="evidence" value="ECO:0007669"/>
    <property type="project" value="UniProtKB-UniRule"/>
</dbReference>
<dbReference type="CDD" id="cd01398">
    <property type="entry name" value="RPI_A"/>
    <property type="match status" value="1"/>
</dbReference>
<dbReference type="FunFam" id="3.30.70.260:FF:000004">
    <property type="entry name" value="Ribose-5-phosphate isomerase A"/>
    <property type="match status" value="1"/>
</dbReference>
<dbReference type="FunFam" id="3.40.50.1360:FF:000001">
    <property type="entry name" value="Ribose-5-phosphate isomerase A"/>
    <property type="match status" value="1"/>
</dbReference>
<dbReference type="Gene3D" id="3.30.70.260">
    <property type="match status" value="1"/>
</dbReference>
<dbReference type="Gene3D" id="3.40.50.1360">
    <property type="match status" value="1"/>
</dbReference>
<dbReference type="HAMAP" id="MF_00170">
    <property type="entry name" value="Rib_5P_isom_A"/>
    <property type="match status" value="1"/>
</dbReference>
<dbReference type="InterPro" id="IPR037171">
    <property type="entry name" value="NagB/RpiA_transferase-like"/>
</dbReference>
<dbReference type="InterPro" id="IPR020672">
    <property type="entry name" value="Ribose5P_isomerase_typA_subgr"/>
</dbReference>
<dbReference type="InterPro" id="IPR004788">
    <property type="entry name" value="Ribose5P_isomerase_type_A"/>
</dbReference>
<dbReference type="NCBIfam" id="NF001924">
    <property type="entry name" value="PRK00702.1"/>
    <property type="match status" value="1"/>
</dbReference>
<dbReference type="NCBIfam" id="TIGR00021">
    <property type="entry name" value="rpiA"/>
    <property type="match status" value="1"/>
</dbReference>
<dbReference type="PANTHER" id="PTHR11934">
    <property type="entry name" value="RIBOSE-5-PHOSPHATE ISOMERASE"/>
    <property type="match status" value="1"/>
</dbReference>
<dbReference type="PANTHER" id="PTHR11934:SF0">
    <property type="entry name" value="RIBOSE-5-PHOSPHATE ISOMERASE"/>
    <property type="match status" value="1"/>
</dbReference>
<dbReference type="Pfam" id="PF06026">
    <property type="entry name" value="Rib_5-P_isom_A"/>
    <property type="match status" value="1"/>
</dbReference>
<dbReference type="SUPFAM" id="SSF75445">
    <property type="entry name" value="D-ribose-5-phosphate isomerase (RpiA), lid domain"/>
    <property type="match status" value="1"/>
</dbReference>
<dbReference type="SUPFAM" id="SSF100950">
    <property type="entry name" value="NagB/RpiA/CoA transferase-like"/>
    <property type="match status" value="1"/>
</dbReference>
<comment type="function">
    <text evidence="1">Catalyzes the reversible conversion of ribose-5-phosphate to ribulose 5-phosphate.</text>
</comment>
<comment type="catalytic activity">
    <reaction evidence="1">
        <text>aldehydo-D-ribose 5-phosphate = D-ribulose 5-phosphate</text>
        <dbReference type="Rhea" id="RHEA:14657"/>
        <dbReference type="ChEBI" id="CHEBI:58121"/>
        <dbReference type="ChEBI" id="CHEBI:58273"/>
        <dbReference type="EC" id="5.3.1.6"/>
    </reaction>
</comment>
<comment type="pathway">
    <text evidence="1">Carbohydrate degradation; pentose phosphate pathway; D-ribose 5-phosphate from D-ribulose 5-phosphate (non-oxidative stage): step 1/1.</text>
</comment>
<comment type="subunit">
    <text evidence="1">Homodimer.</text>
</comment>
<comment type="similarity">
    <text evidence="1">Belongs to the ribose 5-phosphate isomerase family.</text>
</comment>
<sequence>MTQDELKKAVGWAALQYVQPGTIVGVGTGSTAAHFIDALGTMKGQIEGAVSSSDASTEKLKSLGIHVFDLNEVDSLGIYVDGADEINGHMQMIKGGGAALTREKIIASVAEKFICIADASKQVDILGKFPLPVEVIPMARSAVARQLVKLGGRPEYRQGVVTDNGNVILDVHGMEILDPIAMENAINAIPGVVTVGLFANRGADVALIGTPDGVKTIVK</sequence>
<gene>
    <name evidence="1" type="primary">rpiA</name>
    <name type="ordered locus">Z4252</name>
    <name type="ordered locus">ECs3785</name>
</gene>
<proteinExistence type="inferred from homology"/>
<accession>P0A7Z2</accession>
<accession>P27252</accession>
<keyword id="KW-0413">Isomerase</keyword>
<keyword id="KW-1185">Reference proteome</keyword>
<protein>
    <recommendedName>
        <fullName evidence="1">Ribose-5-phosphate isomerase A</fullName>
        <ecNumber evidence="1">5.3.1.6</ecNumber>
    </recommendedName>
    <alternativeName>
        <fullName evidence="1">Phosphoriboisomerase A</fullName>
        <shortName evidence="1">PRI</shortName>
    </alternativeName>
</protein>
<feature type="chain" id="PRO_0000158413" description="Ribose-5-phosphate isomerase A">
    <location>
        <begin position="1"/>
        <end position="219"/>
    </location>
</feature>
<feature type="active site" description="Proton acceptor" evidence="1">
    <location>
        <position position="103"/>
    </location>
</feature>
<feature type="binding site" evidence="1">
    <location>
        <begin position="28"/>
        <end position="31"/>
    </location>
    <ligand>
        <name>substrate</name>
    </ligand>
</feature>
<feature type="binding site" evidence="1">
    <location>
        <begin position="81"/>
        <end position="84"/>
    </location>
    <ligand>
        <name>substrate</name>
    </ligand>
</feature>
<feature type="binding site" evidence="1">
    <location>
        <begin position="94"/>
        <end position="97"/>
    </location>
    <ligand>
        <name>substrate</name>
    </ligand>
</feature>
<feature type="binding site" evidence="1">
    <location>
        <position position="121"/>
    </location>
    <ligand>
        <name>substrate</name>
    </ligand>
</feature>
<organism>
    <name type="scientific">Escherichia coli O157:H7</name>
    <dbReference type="NCBI Taxonomy" id="83334"/>
    <lineage>
        <taxon>Bacteria</taxon>
        <taxon>Pseudomonadati</taxon>
        <taxon>Pseudomonadota</taxon>
        <taxon>Gammaproteobacteria</taxon>
        <taxon>Enterobacterales</taxon>
        <taxon>Enterobacteriaceae</taxon>
        <taxon>Escherichia</taxon>
    </lineage>
</organism>
<reference key="1">
    <citation type="journal article" date="2001" name="Nature">
        <title>Genome sequence of enterohaemorrhagic Escherichia coli O157:H7.</title>
        <authorList>
            <person name="Perna N.T."/>
            <person name="Plunkett G. III"/>
            <person name="Burland V."/>
            <person name="Mau B."/>
            <person name="Glasner J.D."/>
            <person name="Rose D.J."/>
            <person name="Mayhew G.F."/>
            <person name="Evans P.S."/>
            <person name="Gregor J."/>
            <person name="Kirkpatrick H.A."/>
            <person name="Posfai G."/>
            <person name="Hackett J."/>
            <person name="Klink S."/>
            <person name="Boutin A."/>
            <person name="Shao Y."/>
            <person name="Miller L."/>
            <person name="Grotbeck E.J."/>
            <person name="Davis N.W."/>
            <person name="Lim A."/>
            <person name="Dimalanta E.T."/>
            <person name="Potamousis K."/>
            <person name="Apodaca J."/>
            <person name="Anantharaman T.S."/>
            <person name="Lin J."/>
            <person name="Yen G."/>
            <person name="Schwartz D.C."/>
            <person name="Welch R.A."/>
            <person name="Blattner F.R."/>
        </authorList>
    </citation>
    <scope>NUCLEOTIDE SEQUENCE [LARGE SCALE GENOMIC DNA]</scope>
    <source>
        <strain>O157:H7 / EDL933 / ATCC 700927 / EHEC</strain>
    </source>
</reference>
<reference key="2">
    <citation type="journal article" date="2001" name="DNA Res.">
        <title>Complete genome sequence of enterohemorrhagic Escherichia coli O157:H7 and genomic comparison with a laboratory strain K-12.</title>
        <authorList>
            <person name="Hayashi T."/>
            <person name="Makino K."/>
            <person name="Ohnishi M."/>
            <person name="Kurokawa K."/>
            <person name="Ishii K."/>
            <person name="Yokoyama K."/>
            <person name="Han C.-G."/>
            <person name="Ohtsubo E."/>
            <person name="Nakayama K."/>
            <person name="Murata T."/>
            <person name="Tanaka M."/>
            <person name="Tobe T."/>
            <person name="Iida T."/>
            <person name="Takami H."/>
            <person name="Honda T."/>
            <person name="Sasakawa C."/>
            <person name="Ogasawara N."/>
            <person name="Yasunaga T."/>
            <person name="Kuhara S."/>
            <person name="Shiba T."/>
            <person name="Hattori M."/>
            <person name="Shinagawa H."/>
        </authorList>
    </citation>
    <scope>NUCLEOTIDE SEQUENCE [LARGE SCALE GENOMIC DNA]</scope>
    <source>
        <strain>O157:H7 / Sakai / RIMD 0509952 / EHEC</strain>
    </source>
</reference>
<name>RPIA_ECO57</name>
<evidence type="ECO:0000255" key="1">
    <source>
        <dbReference type="HAMAP-Rule" id="MF_00170"/>
    </source>
</evidence>